<accession>Q4KJM7</accession>
<dbReference type="EC" id="3.1.1.96" evidence="1"/>
<dbReference type="EMBL" id="CP000076">
    <property type="protein sequence ID" value="AAY95821.1"/>
    <property type="molecule type" value="Genomic_DNA"/>
</dbReference>
<dbReference type="RefSeq" id="WP_011058787.1">
    <property type="nucleotide sequence ID" value="NC_004129.6"/>
</dbReference>
<dbReference type="SMR" id="Q4KJM7"/>
<dbReference type="STRING" id="220664.PFL_0412"/>
<dbReference type="KEGG" id="pfl:PFL_0412"/>
<dbReference type="PATRIC" id="fig|220664.5.peg.420"/>
<dbReference type="eggNOG" id="COG1490">
    <property type="taxonomic scope" value="Bacteria"/>
</dbReference>
<dbReference type="HOGENOM" id="CLU_076901_1_1_6"/>
<dbReference type="Proteomes" id="UP000008540">
    <property type="component" value="Chromosome"/>
</dbReference>
<dbReference type="GO" id="GO:0005737">
    <property type="term" value="C:cytoplasm"/>
    <property type="evidence" value="ECO:0007669"/>
    <property type="project" value="UniProtKB-SubCell"/>
</dbReference>
<dbReference type="GO" id="GO:0051500">
    <property type="term" value="F:D-tyrosyl-tRNA(Tyr) deacylase activity"/>
    <property type="evidence" value="ECO:0007669"/>
    <property type="project" value="TreeGrafter"/>
</dbReference>
<dbReference type="GO" id="GO:0106026">
    <property type="term" value="F:Gly-tRNA(Ala) deacylase activity"/>
    <property type="evidence" value="ECO:0007669"/>
    <property type="project" value="UniProtKB-UniRule"/>
</dbReference>
<dbReference type="GO" id="GO:0043908">
    <property type="term" value="F:Ser(Gly)-tRNA(Ala) hydrolase activity"/>
    <property type="evidence" value="ECO:0007669"/>
    <property type="project" value="UniProtKB-UniRule"/>
</dbReference>
<dbReference type="GO" id="GO:0000049">
    <property type="term" value="F:tRNA binding"/>
    <property type="evidence" value="ECO:0007669"/>
    <property type="project" value="UniProtKB-UniRule"/>
</dbReference>
<dbReference type="GO" id="GO:0019478">
    <property type="term" value="P:D-amino acid catabolic process"/>
    <property type="evidence" value="ECO:0007669"/>
    <property type="project" value="UniProtKB-UniRule"/>
</dbReference>
<dbReference type="CDD" id="cd00563">
    <property type="entry name" value="Dtyr_deacylase"/>
    <property type="match status" value="1"/>
</dbReference>
<dbReference type="FunFam" id="3.50.80.10:FF:000001">
    <property type="entry name" value="D-aminoacyl-tRNA deacylase"/>
    <property type="match status" value="1"/>
</dbReference>
<dbReference type="Gene3D" id="3.50.80.10">
    <property type="entry name" value="D-tyrosyl-tRNA(Tyr) deacylase"/>
    <property type="match status" value="1"/>
</dbReference>
<dbReference type="HAMAP" id="MF_00518">
    <property type="entry name" value="Deacylase_Dtd"/>
    <property type="match status" value="1"/>
</dbReference>
<dbReference type="InterPro" id="IPR003732">
    <property type="entry name" value="Daa-tRNA_deacyls_DTD"/>
</dbReference>
<dbReference type="InterPro" id="IPR023509">
    <property type="entry name" value="DTD-like_sf"/>
</dbReference>
<dbReference type="NCBIfam" id="TIGR00256">
    <property type="entry name" value="D-aminoacyl-tRNA deacylase"/>
    <property type="match status" value="1"/>
</dbReference>
<dbReference type="PANTHER" id="PTHR10472:SF5">
    <property type="entry name" value="D-AMINOACYL-TRNA DEACYLASE 1"/>
    <property type="match status" value="1"/>
</dbReference>
<dbReference type="PANTHER" id="PTHR10472">
    <property type="entry name" value="D-TYROSYL-TRNA TYR DEACYLASE"/>
    <property type="match status" value="1"/>
</dbReference>
<dbReference type="Pfam" id="PF02580">
    <property type="entry name" value="Tyr_Deacylase"/>
    <property type="match status" value="1"/>
</dbReference>
<dbReference type="SUPFAM" id="SSF69500">
    <property type="entry name" value="DTD-like"/>
    <property type="match status" value="1"/>
</dbReference>
<reference key="1">
    <citation type="journal article" date="2005" name="Nat. Biotechnol.">
        <title>Complete genome sequence of the plant commensal Pseudomonas fluorescens Pf-5.</title>
        <authorList>
            <person name="Paulsen I.T."/>
            <person name="Press C.M."/>
            <person name="Ravel J."/>
            <person name="Kobayashi D.Y."/>
            <person name="Myers G.S.A."/>
            <person name="Mavrodi D.V."/>
            <person name="DeBoy R.T."/>
            <person name="Seshadri R."/>
            <person name="Ren Q."/>
            <person name="Madupu R."/>
            <person name="Dodson R.J."/>
            <person name="Durkin A.S."/>
            <person name="Brinkac L.M."/>
            <person name="Daugherty S.C."/>
            <person name="Sullivan S.A."/>
            <person name="Rosovitz M.J."/>
            <person name="Gwinn M.L."/>
            <person name="Zhou L."/>
            <person name="Schneider D.J."/>
            <person name="Cartinhour S.W."/>
            <person name="Nelson W.C."/>
            <person name="Weidman J."/>
            <person name="Watkins K."/>
            <person name="Tran K."/>
            <person name="Khouri H."/>
            <person name="Pierson E.A."/>
            <person name="Pierson L.S. III"/>
            <person name="Thomashow L.S."/>
            <person name="Loper J.E."/>
        </authorList>
    </citation>
    <scope>NUCLEOTIDE SEQUENCE [LARGE SCALE GENOMIC DNA]</scope>
    <source>
        <strain>ATCC BAA-477 / NRRL B-23932 / Pf-5</strain>
    </source>
</reference>
<sequence length="145" mass="15442">MKGLLQRVRGARVEVAGDIVGAVDQGLLVLVAVEPEDTRASADKLLHKLLNYRVFSDAEGKMNLSLADVQGGLLLVSQFTLAADTKSGLRPSFSTAAPPALGEELFDYLVVKAQQLHGKVASGRFGADMQVHLVNDGPVTFLLQT</sequence>
<name>DTD_PSEF5</name>
<feature type="chain" id="PRO_0000259297" description="D-aminoacyl-tRNA deacylase">
    <location>
        <begin position="1"/>
        <end position="145"/>
    </location>
</feature>
<feature type="short sequence motif" description="Gly-cisPro motif, important for rejection of L-amino acids" evidence="1">
    <location>
        <begin position="137"/>
        <end position="138"/>
    </location>
</feature>
<organism>
    <name type="scientific">Pseudomonas fluorescens (strain ATCC BAA-477 / NRRL B-23932 / Pf-5)</name>
    <dbReference type="NCBI Taxonomy" id="220664"/>
    <lineage>
        <taxon>Bacteria</taxon>
        <taxon>Pseudomonadati</taxon>
        <taxon>Pseudomonadota</taxon>
        <taxon>Gammaproteobacteria</taxon>
        <taxon>Pseudomonadales</taxon>
        <taxon>Pseudomonadaceae</taxon>
        <taxon>Pseudomonas</taxon>
    </lineage>
</organism>
<keyword id="KW-0963">Cytoplasm</keyword>
<keyword id="KW-0378">Hydrolase</keyword>
<keyword id="KW-0694">RNA-binding</keyword>
<keyword id="KW-0820">tRNA-binding</keyword>
<gene>
    <name evidence="1" type="primary">dtd</name>
    <name type="ordered locus">PFL_0412</name>
</gene>
<comment type="function">
    <text evidence="1">An aminoacyl-tRNA editing enzyme that deacylates mischarged D-aminoacyl-tRNAs. Also deacylates mischarged glycyl-tRNA(Ala), protecting cells against glycine mischarging by AlaRS. Acts via tRNA-based rather than protein-based catalysis; rejects L-amino acids rather than detecting D-amino acids in the active site. By recycling D-aminoacyl-tRNA to D-amino acids and free tRNA molecules, this enzyme counteracts the toxicity associated with the formation of D-aminoacyl-tRNA entities in vivo and helps enforce protein L-homochirality.</text>
</comment>
<comment type="catalytic activity">
    <reaction evidence="1">
        <text>glycyl-tRNA(Ala) + H2O = tRNA(Ala) + glycine + H(+)</text>
        <dbReference type="Rhea" id="RHEA:53744"/>
        <dbReference type="Rhea" id="RHEA-COMP:9657"/>
        <dbReference type="Rhea" id="RHEA-COMP:13640"/>
        <dbReference type="ChEBI" id="CHEBI:15377"/>
        <dbReference type="ChEBI" id="CHEBI:15378"/>
        <dbReference type="ChEBI" id="CHEBI:57305"/>
        <dbReference type="ChEBI" id="CHEBI:78442"/>
        <dbReference type="ChEBI" id="CHEBI:78522"/>
        <dbReference type="EC" id="3.1.1.96"/>
    </reaction>
</comment>
<comment type="catalytic activity">
    <reaction evidence="1">
        <text>a D-aminoacyl-tRNA + H2O = a tRNA + a D-alpha-amino acid + H(+)</text>
        <dbReference type="Rhea" id="RHEA:13953"/>
        <dbReference type="Rhea" id="RHEA-COMP:10123"/>
        <dbReference type="Rhea" id="RHEA-COMP:10124"/>
        <dbReference type="ChEBI" id="CHEBI:15377"/>
        <dbReference type="ChEBI" id="CHEBI:15378"/>
        <dbReference type="ChEBI" id="CHEBI:59871"/>
        <dbReference type="ChEBI" id="CHEBI:78442"/>
        <dbReference type="ChEBI" id="CHEBI:79333"/>
        <dbReference type="EC" id="3.1.1.96"/>
    </reaction>
</comment>
<comment type="subunit">
    <text evidence="1">Homodimer.</text>
</comment>
<comment type="subcellular location">
    <subcellularLocation>
        <location evidence="1">Cytoplasm</location>
    </subcellularLocation>
</comment>
<comment type="domain">
    <text evidence="1">A Gly-cisPro motif from one monomer fits into the active site of the other monomer to allow specific chiral rejection of L-amino acids.</text>
</comment>
<comment type="similarity">
    <text evidence="1">Belongs to the DTD family.</text>
</comment>
<evidence type="ECO:0000255" key="1">
    <source>
        <dbReference type="HAMAP-Rule" id="MF_00518"/>
    </source>
</evidence>
<protein>
    <recommendedName>
        <fullName evidence="1">D-aminoacyl-tRNA deacylase</fullName>
        <shortName evidence="1">DTD</shortName>
        <ecNumber evidence="1">3.1.1.96</ecNumber>
    </recommendedName>
    <alternativeName>
        <fullName evidence="1">Gly-tRNA(Ala) deacylase</fullName>
    </alternativeName>
</protein>
<proteinExistence type="inferred from homology"/>